<evidence type="ECO:0000255" key="1">
    <source>
        <dbReference type="HAMAP-Rule" id="MF_00001"/>
    </source>
</evidence>
<organism>
    <name type="scientific">Mycolicibacterium gilvum (strain PYR-GCK)</name>
    <name type="common">Mycobacterium gilvum (strain PYR-GCK)</name>
    <dbReference type="NCBI Taxonomy" id="350054"/>
    <lineage>
        <taxon>Bacteria</taxon>
        <taxon>Bacillati</taxon>
        <taxon>Actinomycetota</taxon>
        <taxon>Actinomycetes</taxon>
        <taxon>Mycobacteriales</taxon>
        <taxon>Mycobacteriaceae</taxon>
        <taxon>Mycolicibacterium</taxon>
    </lineage>
</organism>
<name>PYRB_MYCGI</name>
<reference key="1">
    <citation type="submission" date="2007-04" db="EMBL/GenBank/DDBJ databases">
        <title>Complete sequence of chromosome of Mycobacterium gilvum PYR-GCK.</title>
        <authorList>
            <consortium name="US DOE Joint Genome Institute"/>
            <person name="Copeland A."/>
            <person name="Lucas S."/>
            <person name="Lapidus A."/>
            <person name="Barry K."/>
            <person name="Detter J.C."/>
            <person name="Glavina del Rio T."/>
            <person name="Hammon N."/>
            <person name="Israni S."/>
            <person name="Dalin E."/>
            <person name="Tice H."/>
            <person name="Pitluck S."/>
            <person name="Chain P."/>
            <person name="Malfatti S."/>
            <person name="Shin M."/>
            <person name="Vergez L."/>
            <person name="Schmutz J."/>
            <person name="Larimer F."/>
            <person name="Land M."/>
            <person name="Hauser L."/>
            <person name="Kyrpides N."/>
            <person name="Mikhailova N."/>
            <person name="Miller C."/>
            <person name="Richardson P."/>
        </authorList>
    </citation>
    <scope>NUCLEOTIDE SEQUENCE [LARGE SCALE GENOMIC DNA]</scope>
    <source>
        <strain>PYR-GCK</strain>
    </source>
</reference>
<feature type="chain" id="PRO_1000073733" description="Aspartate carbamoyltransferase catalytic subunit">
    <location>
        <begin position="1"/>
        <end position="315"/>
    </location>
</feature>
<feature type="binding site" evidence="1">
    <location>
        <position position="55"/>
    </location>
    <ligand>
        <name>carbamoyl phosphate</name>
        <dbReference type="ChEBI" id="CHEBI:58228"/>
    </ligand>
</feature>
<feature type="binding site" evidence="1">
    <location>
        <position position="56"/>
    </location>
    <ligand>
        <name>carbamoyl phosphate</name>
        <dbReference type="ChEBI" id="CHEBI:58228"/>
    </ligand>
</feature>
<feature type="binding site" evidence="1">
    <location>
        <position position="83"/>
    </location>
    <ligand>
        <name>L-aspartate</name>
        <dbReference type="ChEBI" id="CHEBI:29991"/>
    </ligand>
</feature>
<feature type="binding site" evidence="1">
    <location>
        <position position="105"/>
    </location>
    <ligand>
        <name>carbamoyl phosphate</name>
        <dbReference type="ChEBI" id="CHEBI:58228"/>
    </ligand>
</feature>
<feature type="binding site" evidence="1">
    <location>
        <position position="138"/>
    </location>
    <ligand>
        <name>carbamoyl phosphate</name>
        <dbReference type="ChEBI" id="CHEBI:58228"/>
    </ligand>
</feature>
<feature type="binding site" evidence="1">
    <location>
        <position position="141"/>
    </location>
    <ligand>
        <name>carbamoyl phosphate</name>
        <dbReference type="ChEBI" id="CHEBI:58228"/>
    </ligand>
</feature>
<feature type="binding site" evidence="1">
    <location>
        <position position="171"/>
    </location>
    <ligand>
        <name>L-aspartate</name>
        <dbReference type="ChEBI" id="CHEBI:29991"/>
    </ligand>
</feature>
<feature type="binding site" evidence="1">
    <location>
        <position position="225"/>
    </location>
    <ligand>
        <name>L-aspartate</name>
        <dbReference type="ChEBI" id="CHEBI:29991"/>
    </ligand>
</feature>
<feature type="binding site" evidence="1">
    <location>
        <position position="266"/>
    </location>
    <ligand>
        <name>carbamoyl phosphate</name>
        <dbReference type="ChEBI" id="CHEBI:58228"/>
    </ligand>
</feature>
<feature type="binding site" evidence="1">
    <location>
        <position position="267"/>
    </location>
    <ligand>
        <name>carbamoyl phosphate</name>
        <dbReference type="ChEBI" id="CHEBI:58228"/>
    </ligand>
</feature>
<accession>A4TBY0</accession>
<proteinExistence type="inferred from homology"/>
<sequence length="315" mass="33793">MKHLLTAADLSRDDATAILDNADRFREALVGREVKKLPTLRGRTIITMFYENSTRTRVSFEVAGKWMSADVINVSASGSSVAKGESLRDTALTLRAAGADALIIRHPASGAPQQLAAWTLDEHGGPSVINAGDGTHEHPTQALLDALTIRQRLGSVEGKRVVIVGDVLHSRVARSNVALLHTLGAEVVLVAPPTLLPVGVTEWPVTVSHELDAELPLADAVLMLRVQAERMNGGFFPSSREYSVRYGLSEKRQSTLADHAVVLHPGPMLRGMEIAYSVADSSQSAVLQQVSNGVHVRMAVLFHLLVGSEEEAISA</sequence>
<protein>
    <recommendedName>
        <fullName evidence="1">Aspartate carbamoyltransferase catalytic subunit</fullName>
        <ecNumber evidence="1">2.1.3.2</ecNumber>
    </recommendedName>
    <alternativeName>
        <fullName evidence="1">Aspartate transcarbamylase</fullName>
        <shortName evidence="1">ATCase</shortName>
    </alternativeName>
</protein>
<keyword id="KW-0665">Pyrimidine biosynthesis</keyword>
<keyword id="KW-0808">Transferase</keyword>
<dbReference type="EC" id="2.1.3.2" evidence="1"/>
<dbReference type="EMBL" id="CP000656">
    <property type="protein sequence ID" value="ABP46219.1"/>
    <property type="molecule type" value="Genomic_DNA"/>
</dbReference>
<dbReference type="SMR" id="A4TBY0"/>
<dbReference type="STRING" id="350054.Mflv_3747"/>
<dbReference type="KEGG" id="mgi:Mflv_3747"/>
<dbReference type="eggNOG" id="COG0540">
    <property type="taxonomic scope" value="Bacteria"/>
</dbReference>
<dbReference type="HOGENOM" id="CLU_043846_2_0_11"/>
<dbReference type="OrthoDB" id="9774690at2"/>
<dbReference type="UniPathway" id="UPA00070">
    <property type="reaction ID" value="UER00116"/>
</dbReference>
<dbReference type="GO" id="GO:0005829">
    <property type="term" value="C:cytosol"/>
    <property type="evidence" value="ECO:0007669"/>
    <property type="project" value="TreeGrafter"/>
</dbReference>
<dbReference type="GO" id="GO:0016597">
    <property type="term" value="F:amino acid binding"/>
    <property type="evidence" value="ECO:0007669"/>
    <property type="project" value="InterPro"/>
</dbReference>
<dbReference type="GO" id="GO:0004070">
    <property type="term" value="F:aspartate carbamoyltransferase activity"/>
    <property type="evidence" value="ECO:0007669"/>
    <property type="project" value="UniProtKB-UniRule"/>
</dbReference>
<dbReference type="GO" id="GO:0006207">
    <property type="term" value="P:'de novo' pyrimidine nucleobase biosynthetic process"/>
    <property type="evidence" value="ECO:0007669"/>
    <property type="project" value="InterPro"/>
</dbReference>
<dbReference type="GO" id="GO:0044205">
    <property type="term" value="P:'de novo' UMP biosynthetic process"/>
    <property type="evidence" value="ECO:0007669"/>
    <property type="project" value="UniProtKB-UniRule"/>
</dbReference>
<dbReference type="GO" id="GO:0006520">
    <property type="term" value="P:amino acid metabolic process"/>
    <property type="evidence" value="ECO:0007669"/>
    <property type="project" value="InterPro"/>
</dbReference>
<dbReference type="FunFam" id="3.40.50.1370:FF:000007">
    <property type="entry name" value="Aspartate carbamoyltransferase"/>
    <property type="match status" value="1"/>
</dbReference>
<dbReference type="Gene3D" id="3.40.50.1370">
    <property type="entry name" value="Aspartate/ornithine carbamoyltransferase"/>
    <property type="match status" value="2"/>
</dbReference>
<dbReference type="HAMAP" id="MF_00001">
    <property type="entry name" value="Asp_carb_tr"/>
    <property type="match status" value="1"/>
</dbReference>
<dbReference type="InterPro" id="IPR006132">
    <property type="entry name" value="Asp/Orn_carbamoyltranf_P-bd"/>
</dbReference>
<dbReference type="InterPro" id="IPR006130">
    <property type="entry name" value="Asp/Orn_carbamoylTrfase"/>
</dbReference>
<dbReference type="InterPro" id="IPR036901">
    <property type="entry name" value="Asp/Orn_carbamoylTrfase_sf"/>
</dbReference>
<dbReference type="InterPro" id="IPR002082">
    <property type="entry name" value="Asp_carbamoyltransf"/>
</dbReference>
<dbReference type="InterPro" id="IPR006131">
    <property type="entry name" value="Asp_carbamoyltransf_Asp/Orn-bd"/>
</dbReference>
<dbReference type="NCBIfam" id="TIGR00670">
    <property type="entry name" value="asp_carb_tr"/>
    <property type="match status" value="1"/>
</dbReference>
<dbReference type="NCBIfam" id="NF002032">
    <property type="entry name" value="PRK00856.1"/>
    <property type="match status" value="1"/>
</dbReference>
<dbReference type="PANTHER" id="PTHR45753:SF6">
    <property type="entry name" value="ASPARTATE CARBAMOYLTRANSFERASE"/>
    <property type="match status" value="1"/>
</dbReference>
<dbReference type="PANTHER" id="PTHR45753">
    <property type="entry name" value="ORNITHINE CARBAMOYLTRANSFERASE, MITOCHONDRIAL"/>
    <property type="match status" value="1"/>
</dbReference>
<dbReference type="Pfam" id="PF00185">
    <property type="entry name" value="OTCace"/>
    <property type="match status" value="1"/>
</dbReference>
<dbReference type="Pfam" id="PF02729">
    <property type="entry name" value="OTCace_N"/>
    <property type="match status" value="1"/>
</dbReference>
<dbReference type="PRINTS" id="PR00100">
    <property type="entry name" value="AOTCASE"/>
</dbReference>
<dbReference type="PRINTS" id="PR00101">
    <property type="entry name" value="ATCASE"/>
</dbReference>
<dbReference type="SUPFAM" id="SSF53671">
    <property type="entry name" value="Aspartate/ornithine carbamoyltransferase"/>
    <property type="match status" value="1"/>
</dbReference>
<dbReference type="PROSITE" id="PS00097">
    <property type="entry name" value="CARBAMOYLTRANSFERASE"/>
    <property type="match status" value="1"/>
</dbReference>
<gene>
    <name evidence="1" type="primary">pyrB</name>
    <name type="ordered locus">Mflv_3747</name>
</gene>
<comment type="function">
    <text evidence="1">Catalyzes the condensation of carbamoyl phosphate and aspartate to form carbamoyl aspartate and inorganic phosphate, the committed step in the de novo pyrimidine nucleotide biosynthesis pathway.</text>
</comment>
<comment type="catalytic activity">
    <reaction evidence="1">
        <text>carbamoyl phosphate + L-aspartate = N-carbamoyl-L-aspartate + phosphate + H(+)</text>
        <dbReference type="Rhea" id="RHEA:20013"/>
        <dbReference type="ChEBI" id="CHEBI:15378"/>
        <dbReference type="ChEBI" id="CHEBI:29991"/>
        <dbReference type="ChEBI" id="CHEBI:32814"/>
        <dbReference type="ChEBI" id="CHEBI:43474"/>
        <dbReference type="ChEBI" id="CHEBI:58228"/>
        <dbReference type="EC" id="2.1.3.2"/>
    </reaction>
</comment>
<comment type="pathway">
    <text evidence="1">Pyrimidine metabolism; UMP biosynthesis via de novo pathway; (S)-dihydroorotate from bicarbonate: step 2/3.</text>
</comment>
<comment type="subunit">
    <text evidence="1">Heterododecamer (2C3:3R2) of six catalytic PyrB chains organized as two trimers (C3), and six regulatory PyrI chains organized as three dimers (R2).</text>
</comment>
<comment type="similarity">
    <text evidence="1">Belongs to the aspartate/ornithine carbamoyltransferase superfamily. ATCase family.</text>
</comment>